<evidence type="ECO:0000255" key="1">
    <source>
        <dbReference type="HAMAP-Rule" id="MF_01844"/>
    </source>
</evidence>
<keyword id="KW-0050">Antiport</keyword>
<keyword id="KW-0997">Cell inner membrane</keyword>
<keyword id="KW-1003">Cell membrane</keyword>
<keyword id="KW-0406">Ion transport</keyword>
<keyword id="KW-0472">Membrane</keyword>
<keyword id="KW-1185">Reference proteome</keyword>
<keyword id="KW-0915">Sodium</keyword>
<keyword id="KW-0739">Sodium transport</keyword>
<keyword id="KW-0812">Transmembrane</keyword>
<keyword id="KW-1133">Transmembrane helix</keyword>
<keyword id="KW-0813">Transport</keyword>
<dbReference type="EMBL" id="CP000302">
    <property type="protein sequence ID" value="ABE54765.1"/>
    <property type="molecule type" value="Genomic_DNA"/>
</dbReference>
<dbReference type="SMR" id="Q12P61"/>
<dbReference type="STRING" id="318161.Sden_1480"/>
<dbReference type="KEGG" id="sdn:Sden_1480"/>
<dbReference type="eggNOG" id="COG3004">
    <property type="taxonomic scope" value="Bacteria"/>
</dbReference>
<dbReference type="HOGENOM" id="CLU_015803_1_2_6"/>
<dbReference type="Proteomes" id="UP000001982">
    <property type="component" value="Chromosome"/>
</dbReference>
<dbReference type="GO" id="GO:0005886">
    <property type="term" value="C:plasma membrane"/>
    <property type="evidence" value="ECO:0007669"/>
    <property type="project" value="UniProtKB-SubCell"/>
</dbReference>
<dbReference type="GO" id="GO:0015385">
    <property type="term" value="F:sodium:proton antiporter activity"/>
    <property type="evidence" value="ECO:0007669"/>
    <property type="project" value="TreeGrafter"/>
</dbReference>
<dbReference type="GO" id="GO:0006885">
    <property type="term" value="P:regulation of pH"/>
    <property type="evidence" value="ECO:0007669"/>
    <property type="project" value="InterPro"/>
</dbReference>
<dbReference type="Gene3D" id="1.20.1530.10">
    <property type="entry name" value="Na+/H+ antiporter like domain"/>
    <property type="match status" value="1"/>
</dbReference>
<dbReference type="HAMAP" id="MF_01844">
    <property type="entry name" value="NhaA"/>
    <property type="match status" value="1"/>
</dbReference>
<dbReference type="InterPro" id="IPR023171">
    <property type="entry name" value="Na/H_antiporter_dom_sf"/>
</dbReference>
<dbReference type="InterPro" id="IPR004670">
    <property type="entry name" value="NhaA"/>
</dbReference>
<dbReference type="NCBIfam" id="TIGR00773">
    <property type="entry name" value="NhaA"/>
    <property type="match status" value="1"/>
</dbReference>
<dbReference type="PANTHER" id="PTHR30341:SF0">
    <property type="entry name" value="NA(+)_H(+) ANTIPORTER NHAA"/>
    <property type="match status" value="1"/>
</dbReference>
<dbReference type="PANTHER" id="PTHR30341">
    <property type="entry name" value="SODIUM ION/PROTON ANTIPORTER NHAA-RELATED"/>
    <property type="match status" value="1"/>
</dbReference>
<dbReference type="Pfam" id="PF06965">
    <property type="entry name" value="Na_H_antiport_1"/>
    <property type="match status" value="1"/>
</dbReference>
<name>NHAA1_SHEDO</name>
<comment type="function">
    <text evidence="1">Na(+)/H(+) antiporter that extrudes sodium in exchange for external protons.</text>
</comment>
<comment type="catalytic activity">
    <reaction evidence="1">
        <text>Na(+)(in) + 2 H(+)(out) = Na(+)(out) + 2 H(+)(in)</text>
        <dbReference type="Rhea" id="RHEA:29251"/>
        <dbReference type="ChEBI" id="CHEBI:15378"/>
        <dbReference type="ChEBI" id="CHEBI:29101"/>
    </reaction>
    <physiologicalReaction direction="left-to-right" evidence="1">
        <dbReference type="Rhea" id="RHEA:29252"/>
    </physiologicalReaction>
</comment>
<comment type="subcellular location">
    <subcellularLocation>
        <location evidence="1">Cell inner membrane</location>
        <topology evidence="1">Multi-pass membrane protein</topology>
    </subcellularLocation>
</comment>
<comment type="similarity">
    <text evidence="1">Belongs to the NhaA Na(+)/H(+) (TC 2.A.33) antiporter family.</text>
</comment>
<protein>
    <recommendedName>
        <fullName evidence="1">Na(+)/H(+) antiporter NhaA 1</fullName>
    </recommendedName>
    <alternativeName>
        <fullName evidence="1">Sodium/proton antiporter NhaA 1</fullName>
    </alternativeName>
</protein>
<accession>Q12P61</accession>
<proteinExistence type="inferred from homology"/>
<gene>
    <name evidence="1" type="primary">nhaA1</name>
    <name type="ordered locus">Sden_1480</name>
</gene>
<reference key="1">
    <citation type="submission" date="2006-03" db="EMBL/GenBank/DDBJ databases">
        <title>Complete sequence of Shewanella denitrificans OS217.</title>
        <authorList>
            <consortium name="US DOE Joint Genome Institute"/>
            <person name="Copeland A."/>
            <person name="Lucas S."/>
            <person name="Lapidus A."/>
            <person name="Barry K."/>
            <person name="Detter J.C."/>
            <person name="Glavina del Rio T."/>
            <person name="Hammon N."/>
            <person name="Israni S."/>
            <person name="Dalin E."/>
            <person name="Tice H."/>
            <person name="Pitluck S."/>
            <person name="Brettin T."/>
            <person name="Bruce D."/>
            <person name="Han C."/>
            <person name="Tapia R."/>
            <person name="Gilna P."/>
            <person name="Kiss H."/>
            <person name="Schmutz J."/>
            <person name="Larimer F."/>
            <person name="Land M."/>
            <person name="Hauser L."/>
            <person name="Kyrpides N."/>
            <person name="Lykidis A."/>
            <person name="Richardson P."/>
        </authorList>
    </citation>
    <scope>NUCLEOTIDE SEQUENCE [LARGE SCALE GENOMIC DNA]</scope>
    <source>
        <strain>OS217 / ATCC BAA-1090 / DSM 15013</strain>
    </source>
</reference>
<organism>
    <name type="scientific">Shewanella denitrificans (strain OS217 / ATCC BAA-1090 / DSM 15013)</name>
    <dbReference type="NCBI Taxonomy" id="318161"/>
    <lineage>
        <taxon>Bacteria</taxon>
        <taxon>Pseudomonadati</taxon>
        <taxon>Pseudomonadota</taxon>
        <taxon>Gammaproteobacteria</taxon>
        <taxon>Alteromonadales</taxon>
        <taxon>Shewanellaceae</taxon>
        <taxon>Shewanella</taxon>
    </lineage>
</organism>
<sequence>MQSNKMTKETKNVLQRGLENIHHPVSNFIRAQTTSSLFLLFATIIALWWANSDYAQSYQALIHTQLGFFIGDFELKASLKHIINDGLMVIFFFLLGLEIKREVIAGELAQAKNRRMLIICAMGGMVCPALIYSGFNWSLDSQIGWGIPMATDTAFALGVLTMVRKHIPSSLVAFIVGLAIVDDVGAILVIAIFYTQEISLMHLLSACALIGFLGVANYAGVRQPLFYFIIGVAAWWAMLKSGVHPTVAGVTIALTIPAQPKLASGKWLEKAKSIISAIQNKSKNMDVLGNKGHHEQVLKVRDFAERASTPLRRWEDALDLPVVLFILPLFALANAGVVINLSSFIESVQHPVGLGIISGLILGKLIGISGACWFALKFNIGCLPDKVDLNHVIGASLIAGIGFTMSTFIATLGFGDQDTALHVAKTSILLASVLTAILGLLYLRFVSTKA</sequence>
<feature type="chain" id="PRO_0000334423" description="Na(+)/H(+) antiporter NhaA 1">
    <location>
        <begin position="1"/>
        <end position="450"/>
    </location>
</feature>
<feature type="transmembrane region" description="Helical" evidence="1">
    <location>
        <begin position="35"/>
        <end position="55"/>
    </location>
</feature>
<feature type="transmembrane region" description="Helical" evidence="1">
    <location>
        <begin position="79"/>
        <end position="99"/>
    </location>
</feature>
<feature type="transmembrane region" description="Helical" evidence="1">
    <location>
        <begin position="117"/>
        <end position="137"/>
    </location>
</feature>
<feature type="transmembrane region" description="Helical" evidence="1">
    <location>
        <begin position="143"/>
        <end position="163"/>
    </location>
</feature>
<feature type="transmembrane region" description="Helical" evidence="1">
    <location>
        <begin position="173"/>
        <end position="193"/>
    </location>
</feature>
<feature type="transmembrane region" description="Helical" evidence="1">
    <location>
        <begin position="198"/>
        <end position="218"/>
    </location>
</feature>
<feature type="transmembrane region" description="Helical" evidence="1">
    <location>
        <begin position="224"/>
        <end position="244"/>
    </location>
</feature>
<feature type="transmembrane region" description="Helical" evidence="1">
    <location>
        <begin position="320"/>
        <end position="340"/>
    </location>
</feature>
<feature type="transmembrane region" description="Helical" evidence="1">
    <location>
        <begin position="356"/>
        <end position="376"/>
    </location>
</feature>
<feature type="transmembrane region" description="Helical" evidence="1">
    <location>
        <begin position="392"/>
        <end position="412"/>
    </location>
</feature>
<feature type="transmembrane region" description="Helical" evidence="1">
    <location>
        <begin position="423"/>
        <end position="443"/>
    </location>
</feature>